<proteinExistence type="inferred from homology"/>
<accession>Q3Z267</accession>
<keyword id="KW-0007">Acetylation</keyword>
<keyword id="KW-0030">Aminoacyl-tRNA synthetase</keyword>
<keyword id="KW-0067">ATP-binding</keyword>
<keyword id="KW-0963">Cytoplasm</keyword>
<keyword id="KW-0436">Ligase</keyword>
<keyword id="KW-0479">Metal-binding</keyword>
<keyword id="KW-0547">Nucleotide-binding</keyword>
<keyword id="KW-0648">Protein biosynthesis</keyword>
<keyword id="KW-1185">Reference proteome</keyword>
<keyword id="KW-0694">RNA-binding</keyword>
<keyword id="KW-0820">tRNA-binding</keyword>
<keyword id="KW-0862">Zinc</keyword>
<feature type="chain" id="PRO_1000020514" description="Threonine--tRNA ligase">
    <location>
        <begin position="1"/>
        <end position="642"/>
    </location>
</feature>
<feature type="domain" description="TGS" evidence="2">
    <location>
        <begin position="1"/>
        <end position="61"/>
    </location>
</feature>
<feature type="region of interest" description="Catalytic" evidence="1">
    <location>
        <begin position="243"/>
        <end position="534"/>
    </location>
</feature>
<feature type="binding site" evidence="1">
    <location>
        <position position="334"/>
    </location>
    <ligand>
        <name>Zn(2+)</name>
        <dbReference type="ChEBI" id="CHEBI:29105"/>
    </ligand>
</feature>
<feature type="binding site" evidence="1">
    <location>
        <position position="385"/>
    </location>
    <ligand>
        <name>Zn(2+)</name>
        <dbReference type="ChEBI" id="CHEBI:29105"/>
    </ligand>
</feature>
<feature type="binding site" evidence="1">
    <location>
        <position position="511"/>
    </location>
    <ligand>
        <name>Zn(2+)</name>
        <dbReference type="ChEBI" id="CHEBI:29105"/>
    </ligand>
</feature>
<feature type="modified residue" description="N6-acetyllysine" evidence="1">
    <location>
        <position position="286"/>
    </location>
</feature>
<dbReference type="EC" id="6.1.1.3" evidence="1"/>
<dbReference type="EMBL" id="CP000038">
    <property type="protein sequence ID" value="AAZ88145.1"/>
    <property type="molecule type" value="Genomic_DNA"/>
</dbReference>
<dbReference type="RefSeq" id="WP_001144202.1">
    <property type="nucleotide sequence ID" value="NC_007384.1"/>
</dbReference>
<dbReference type="SMR" id="Q3Z267"/>
<dbReference type="GeneID" id="93775932"/>
<dbReference type="KEGG" id="ssn:SSON_1439"/>
<dbReference type="HOGENOM" id="CLU_008554_0_1_6"/>
<dbReference type="Proteomes" id="UP000002529">
    <property type="component" value="Chromosome"/>
</dbReference>
<dbReference type="GO" id="GO:0005829">
    <property type="term" value="C:cytosol"/>
    <property type="evidence" value="ECO:0007669"/>
    <property type="project" value="TreeGrafter"/>
</dbReference>
<dbReference type="GO" id="GO:0005524">
    <property type="term" value="F:ATP binding"/>
    <property type="evidence" value="ECO:0007669"/>
    <property type="project" value="UniProtKB-UniRule"/>
</dbReference>
<dbReference type="GO" id="GO:0046872">
    <property type="term" value="F:metal ion binding"/>
    <property type="evidence" value="ECO:0007669"/>
    <property type="project" value="UniProtKB-KW"/>
</dbReference>
<dbReference type="GO" id="GO:0004829">
    <property type="term" value="F:threonine-tRNA ligase activity"/>
    <property type="evidence" value="ECO:0007669"/>
    <property type="project" value="UniProtKB-UniRule"/>
</dbReference>
<dbReference type="GO" id="GO:0000049">
    <property type="term" value="F:tRNA binding"/>
    <property type="evidence" value="ECO:0007669"/>
    <property type="project" value="UniProtKB-KW"/>
</dbReference>
<dbReference type="GO" id="GO:0006435">
    <property type="term" value="P:threonyl-tRNA aminoacylation"/>
    <property type="evidence" value="ECO:0007669"/>
    <property type="project" value="UniProtKB-UniRule"/>
</dbReference>
<dbReference type="CDD" id="cd01667">
    <property type="entry name" value="TGS_ThrRS"/>
    <property type="match status" value="1"/>
</dbReference>
<dbReference type="CDD" id="cd00860">
    <property type="entry name" value="ThrRS_anticodon"/>
    <property type="match status" value="1"/>
</dbReference>
<dbReference type="CDD" id="cd00771">
    <property type="entry name" value="ThrRS_core"/>
    <property type="match status" value="1"/>
</dbReference>
<dbReference type="FunFam" id="3.10.20.30:FF:000005">
    <property type="entry name" value="Threonine--tRNA ligase"/>
    <property type="match status" value="1"/>
</dbReference>
<dbReference type="FunFam" id="3.30.54.20:FF:000002">
    <property type="entry name" value="Threonine--tRNA ligase"/>
    <property type="match status" value="1"/>
</dbReference>
<dbReference type="FunFam" id="3.30.930.10:FF:000002">
    <property type="entry name" value="Threonine--tRNA ligase"/>
    <property type="match status" value="1"/>
</dbReference>
<dbReference type="FunFam" id="3.40.50.800:FF:000001">
    <property type="entry name" value="Threonine--tRNA ligase"/>
    <property type="match status" value="1"/>
</dbReference>
<dbReference type="FunFam" id="3.30.980.10:FF:000005">
    <property type="entry name" value="Threonyl-tRNA synthetase, mitochondrial"/>
    <property type="match status" value="1"/>
</dbReference>
<dbReference type="Gene3D" id="3.10.20.30">
    <property type="match status" value="1"/>
</dbReference>
<dbReference type="Gene3D" id="3.30.54.20">
    <property type="match status" value="1"/>
</dbReference>
<dbReference type="Gene3D" id="3.40.50.800">
    <property type="entry name" value="Anticodon-binding domain"/>
    <property type="match status" value="1"/>
</dbReference>
<dbReference type="Gene3D" id="3.30.930.10">
    <property type="entry name" value="Bira Bifunctional Protein, Domain 2"/>
    <property type="match status" value="1"/>
</dbReference>
<dbReference type="Gene3D" id="3.30.980.10">
    <property type="entry name" value="Threonyl-trna Synthetase, Chain A, domain 2"/>
    <property type="match status" value="1"/>
</dbReference>
<dbReference type="HAMAP" id="MF_00184">
    <property type="entry name" value="Thr_tRNA_synth"/>
    <property type="match status" value="1"/>
</dbReference>
<dbReference type="InterPro" id="IPR002314">
    <property type="entry name" value="aa-tRNA-synt_IIb"/>
</dbReference>
<dbReference type="InterPro" id="IPR006195">
    <property type="entry name" value="aa-tRNA-synth_II"/>
</dbReference>
<dbReference type="InterPro" id="IPR045864">
    <property type="entry name" value="aa-tRNA-synth_II/BPL/LPL"/>
</dbReference>
<dbReference type="InterPro" id="IPR004154">
    <property type="entry name" value="Anticodon-bd"/>
</dbReference>
<dbReference type="InterPro" id="IPR036621">
    <property type="entry name" value="Anticodon-bd_dom_sf"/>
</dbReference>
<dbReference type="InterPro" id="IPR012675">
    <property type="entry name" value="Beta-grasp_dom_sf"/>
</dbReference>
<dbReference type="InterPro" id="IPR004095">
    <property type="entry name" value="TGS"/>
</dbReference>
<dbReference type="InterPro" id="IPR012676">
    <property type="entry name" value="TGS-like"/>
</dbReference>
<dbReference type="InterPro" id="IPR002320">
    <property type="entry name" value="Thr-tRNA-ligase_IIa"/>
</dbReference>
<dbReference type="InterPro" id="IPR018163">
    <property type="entry name" value="Thr/Ala-tRNA-synth_IIc_edit"/>
</dbReference>
<dbReference type="InterPro" id="IPR047246">
    <property type="entry name" value="ThrRS_anticodon"/>
</dbReference>
<dbReference type="InterPro" id="IPR033728">
    <property type="entry name" value="ThrRS_core"/>
</dbReference>
<dbReference type="InterPro" id="IPR012947">
    <property type="entry name" value="tRNA_SAD"/>
</dbReference>
<dbReference type="NCBIfam" id="TIGR00418">
    <property type="entry name" value="thrS"/>
    <property type="match status" value="1"/>
</dbReference>
<dbReference type="PANTHER" id="PTHR11451:SF44">
    <property type="entry name" value="THREONINE--TRNA LIGASE, CHLOROPLASTIC_MITOCHONDRIAL 2"/>
    <property type="match status" value="1"/>
</dbReference>
<dbReference type="PANTHER" id="PTHR11451">
    <property type="entry name" value="THREONINE-TRNA LIGASE"/>
    <property type="match status" value="1"/>
</dbReference>
<dbReference type="Pfam" id="PF03129">
    <property type="entry name" value="HGTP_anticodon"/>
    <property type="match status" value="1"/>
</dbReference>
<dbReference type="Pfam" id="PF02824">
    <property type="entry name" value="TGS"/>
    <property type="match status" value="1"/>
</dbReference>
<dbReference type="Pfam" id="PF00587">
    <property type="entry name" value="tRNA-synt_2b"/>
    <property type="match status" value="1"/>
</dbReference>
<dbReference type="Pfam" id="PF07973">
    <property type="entry name" value="tRNA_SAD"/>
    <property type="match status" value="1"/>
</dbReference>
<dbReference type="PRINTS" id="PR01047">
    <property type="entry name" value="TRNASYNTHTHR"/>
</dbReference>
<dbReference type="SMART" id="SM00863">
    <property type="entry name" value="tRNA_SAD"/>
    <property type="match status" value="1"/>
</dbReference>
<dbReference type="SUPFAM" id="SSF52954">
    <property type="entry name" value="Class II aaRS ABD-related"/>
    <property type="match status" value="1"/>
</dbReference>
<dbReference type="SUPFAM" id="SSF55681">
    <property type="entry name" value="Class II aaRS and biotin synthetases"/>
    <property type="match status" value="1"/>
</dbReference>
<dbReference type="SUPFAM" id="SSF81271">
    <property type="entry name" value="TGS-like"/>
    <property type="match status" value="1"/>
</dbReference>
<dbReference type="SUPFAM" id="SSF55186">
    <property type="entry name" value="ThrRS/AlaRS common domain"/>
    <property type="match status" value="1"/>
</dbReference>
<dbReference type="PROSITE" id="PS50862">
    <property type="entry name" value="AA_TRNA_LIGASE_II"/>
    <property type="match status" value="1"/>
</dbReference>
<dbReference type="PROSITE" id="PS51880">
    <property type="entry name" value="TGS"/>
    <property type="match status" value="1"/>
</dbReference>
<comment type="function">
    <text evidence="1">Catalyzes the attachment of threonine to tRNA(Thr) in a two-step reaction: L-threonine is first activated by ATP to form Thr-AMP and then transferred to the acceptor end of tRNA(Thr). Also edits incorrectly charged L-seryl-tRNA(Thr).</text>
</comment>
<comment type="catalytic activity">
    <reaction evidence="1">
        <text>tRNA(Thr) + L-threonine + ATP = L-threonyl-tRNA(Thr) + AMP + diphosphate + H(+)</text>
        <dbReference type="Rhea" id="RHEA:24624"/>
        <dbReference type="Rhea" id="RHEA-COMP:9670"/>
        <dbReference type="Rhea" id="RHEA-COMP:9704"/>
        <dbReference type="ChEBI" id="CHEBI:15378"/>
        <dbReference type="ChEBI" id="CHEBI:30616"/>
        <dbReference type="ChEBI" id="CHEBI:33019"/>
        <dbReference type="ChEBI" id="CHEBI:57926"/>
        <dbReference type="ChEBI" id="CHEBI:78442"/>
        <dbReference type="ChEBI" id="CHEBI:78534"/>
        <dbReference type="ChEBI" id="CHEBI:456215"/>
        <dbReference type="EC" id="6.1.1.3"/>
    </reaction>
</comment>
<comment type="cofactor">
    <cofactor evidence="1">
        <name>Zn(2+)</name>
        <dbReference type="ChEBI" id="CHEBI:29105"/>
    </cofactor>
    <text evidence="1">Binds 1 zinc ion per subunit.</text>
</comment>
<comment type="subunit">
    <text evidence="1">Homodimer.</text>
</comment>
<comment type="subcellular location">
    <subcellularLocation>
        <location evidence="1">Cytoplasm</location>
    </subcellularLocation>
</comment>
<comment type="similarity">
    <text evidence="1">Belongs to the class-II aminoacyl-tRNA synthetase family.</text>
</comment>
<name>SYT_SHISS</name>
<reference key="1">
    <citation type="journal article" date="2005" name="Nucleic Acids Res.">
        <title>Genome dynamics and diversity of Shigella species, the etiologic agents of bacillary dysentery.</title>
        <authorList>
            <person name="Yang F."/>
            <person name="Yang J."/>
            <person name="Zhang X."/>
            <person name="Chen L."/>
            <person name="Jiang Y."/>
            <person name="Yan Y."/>
            <person name="Tang X."/>
            <person name="Wang J."/>
            <person name="Xiong Z."/>
            <person name="Dong J."/>
            <person name="Xue Y."/>
            <person name="Zhu Y."/>
            <person name="Xu X."/>
            <person name="Sun L."/>
            <person name="Chen S."/>
            <person name="Nie H."/>
            <person name="Peng J."/>
            <person name="Xu J."/>
            <person name="Wang Y."/>
            <person name="Yuan Z."/>
            <person name="Wen Y."/>
            <person name="Yao Z."/>
            <person name="Shen Y."/>
            <person name="Qiang B."/>
            <person name="Hou Y."/>
            <person name="Yu J."/>
            <person name="Jin Q."/>
        </authorList>
    </citation>
    <scope>NUCLEOTIDE SEQUENCE [LARGE SCALE GENOMIC DNA]</scope>
    <source>
        <strain>Ss046</strain>
    </source>
</reference>
<organism>
    <name type="scientific">Shigella sonnei (strain Ss046)</name>
    <dbReference type="NCBI Taxonomy" id="300269"/>
    <lineage>
        <taxon>Bacteria</taxon>
        <taxon>Pseudomonadati</taxon>
        <taxon>Pseudomonadota</taxon>
        <taxon>Gammaproteobacteria</taxon>
        <taxon>Enterobacterales</taxon>
        <taxon>Enterobacteriaceae</taxon>
        <taxon>Shigella</taxon>
    </lineage>
</organism>
<sequence length="642" mass="74014">MPVITLPDGSQRHYDHAVSPMDVALDIGPGLAKACIAGRVNGELVDACDLIENDAQLSIITAKDEEGLEIIRHSCAHLLGHAIKQLWPHTKMAIGPVIDNGFYYDVDLDRTLTQEDVEALEKRMHELAEKNYDVIKKKVSWHEARETFANRGESYKVSILDENIAHDDKPGLYFHEEYVDMCRGPHVPNMRFCHHFKLMKTAGAYWRGDSNNKMLQRIYGTAWADKKALNAYLQRLEEAAKRDHRKIGKQLDLYHMQEEAPGMVFWHNDGWTIFRELEVFVRSKLKEYQYQEVKGPFMMDRVLWEKTGHWDNYKDAMFTTSSENREYCIKPMNCPGHVQIFNQGLKSYRDLPLRMAEFGSCHRNEPSGSLHGLMRVRGFTQDDAHIFCTEEQIRDEVNGCIRLVYDMYSTFGFEKIVVKLSTRPEKRIGSDEMWDRAEADLAVALEENNIPFEYQLGEGAFYGPKIEFTLYDCLDRAWQCGTVQLDFSLPSRLSASYVGEDNERKVPVMIHRAILGSMERFIGILTEEFAGFFPTWLAPVQVVIMNITDSQSEYVNELTQKLSNAGIRVKADLRNEKIGFKIREHTLRRVPYMLVCGDKEVESGKVAVRTRRGKDLGSMDVNEVIEKLQQEIRSRSLKQLEE</sequence>
<protein>
    <recommendedName>
        <fullName evidence="1">Threonine--tRNA ligase</fullName>
        <ecNumber evidence="1">6.1.1.3</ecNumber>
    </recommendedName>
    <alternativeName>
        <fullName evidence="1">Threonyl-tRNA synthetase</fullName>
        <shortName evidence="1">ThrRS</shortName>
    </alternativeName>
</protein>
<evidence type="ECO:0000255" key="1">
    <source>
        <dbReference type="HAMAP-Rule" id="MF_00184"/>
    </source>
</evidence>
<evidence type="ECO:0000255" key="2">
    <source>
        <dbReference type="PROSITE-ProRule" id="PRU01228"/>
    </source>
</evidence>
<gene>
    <name evidence="1" type="primary">thrS</name>
    <name type="ordered locus">SSON_1439</name>
</gene>